<reference key="1">
    <citation type="journal article" date="2001" name="Genome Res.">
        <title>The complete genome sequence of the lactic acid bacterium Lactococcus lactis ssp. lactis IL1403.</title>
        <authorList>
            <person name="Bolotin A."/>
            <person name="Wincker P."/>
            <person name="Mauger S."/>
            <person name="Jaillon O."/>
            <person name="Malarme K."/>
            <person name="Weissenbach J."/>
            <person name="Ehrlich S.D."/>
            <person name="Sorokin A."/>
        </authorList>
    </citation>
    <scope>NUCLEOTIDE SEQUENCE [LARGE SCALE GENOMIC DNA]</scope>
    <source>
        <strain>IL1403</strain>
    </source>
</reference>
<protein>
    <recommendedName>
        <fullName evidence="1">Small ribosomal subunit protein uS14B</fullName>
    </recommendedName>
    <alternativeName>
        <fullName evidence="2">30S ribosomal protein S14 type Z</fullName>
    </alternativeName>
</protein>
<feature type="chain" id="PRO_0000130896" description="Small ribosomal subunit protein uS14B">
    <location>
        <begin position="1"/>
        <end position="61"/>
    </location>
</feature>
<feature type="binding site" evidence="1">
    <location>
        <position position="24"/>
    </location>
    <ligand>
        <name>Zn(2+)</name>
        <dbReference type="ChEBI" id="CHEBI:29105"/>
    </ligand>
</feature>
<feature type="binding site" evidence="1">
    <location>
        <position position="27"/>
    </location>
    <ligand>
        <name>Zn(2+)</name>
        <dbReference type="ChEBI" id="CHEBI:29105"/>
    </ligand>
</feature>
<feature type="binding site" evidence="1">
    <location>
        <position position="40"/>
    </location>
    <ligand>
        <name>Zn(2+)</name>
        <dbReference type="ChEBI" id="CHEBI:29105"/>
    </ligand>
</feature>
<feature type="binding site" evidence="1">
    <location>
        <position position="43"/>
    </location>
    <ligand>
        <name>Zn(2+)</name>
        <dbReference type="ChEBI" id="CHEBI:29105"/>
    </ligand>
</feature>
<organism>
    <name type="scientific">Lactococcus lactis subsp. lactis (strain IL1403)</name>
    <name type="common">Streptococcus lactis</name>
    <dbReference type="NCBI Taxonomy" id="272623"/>
    <lineage>
        <taxon>Bacteria</taxon>
        <taxon>Bacillati</taxon>
        <taxon>Bacillota</taxon>
        <taxon>Bacilli</taxon>
        <taxon>Lactobacillales</taxon>
        <taxon>Streptococcaceae</taxon>
        <taxon>Lactococcus</taxon>
    </lineage>
</organism>
<sequence length="61" mass="7135">MAKKSMVVKNQRPAKFSTQAYTRCERCGRPHSVYRKFKLCRICLRELAYKGQLPGVKKASW</sequence>
<name>RS14Z_LACLA</name>
<comment type="function">
    <text evidence="1">Binds 16S rRNA, required for the assembly of 30S particles and may also be responsible for determining the conformation of the 16S rRNA at the A site.</text>
</comment>
<comment type="cofactor">
    <cofactor evidence="1">
        <name>Zn(2+)</name>
        <dbReference type="ChEBI" id="CHEBI:29105"/>
    </cofactor>
    <text evidence="1">Binds 1 zinc ion per subunit.</text>
</comment>
<comment type="subunit">
    <text evidence="1">Part of the 30S ribosomal subunit. Contacts proteins S3 and S10.</text>
</comment>
<comment type="similarity">
    <text evidence="1">Belongs to the universal ribosomal protein uS14 family. Zinc-binding uS14 subfamily.</text>
</comment>
<proteinExistence type="inferred from homology"/>
<accession>Q9CDX5</accession>
<keyword id="KW-0479">Metal-binding</keyword>
<keyword id="KW-1185">Reference proteome</keyword>
<keyword id="KW-0687">Ribonucleoprotein</keyword>
<keyword id="KW-0689">Ribosomal protein</keyword>
<keyword id="KW-0694">RNA-binding</keyword>
<keyword id="KW-0699">rRNA-binding</keyword>
<keyword id="KW-0862">Zinc</keyword>
<dbReference type="EMBL" id="AE005176">
    <property type="protein sequence ID" value="AAK06184.1"/>
    <property type="molecule type" value="Genomic_DNA"/>
</dbReference>
<dbReference type="PIR" id="F86885">
    <property type="entry name" value="F86885"/>
</dbReference>
<dbReference type="RefSeq" id="NP_268243.1">
    <property type="nucleotide sequence ID" value="NC_002662.1"/>
</dbReference>
<dbReference type="RefSeq" id="WP_003129946.1">
    <property type="nucleotide sequence ID" value="NC_002662.1"/>
</dbReference>
<dbReference type="SMR" id="Q9CDX5"/>
<dbReference type="PaxDb" id="272623-L0391"/>
<dbReference type="EnsemblBacteria" id="AAK06184">
    <property type="protein sequence ID" value="AAK06184"/>
    <property type="gene ID" value="L0391"/>
</dbReference>
<dbReference type="KEGG" id="lla:L0391"/>
<dbReference type="PATRIC" id="fig|272623.7.peg.2245"/>
<dbReference type="eggNOG" id="COG0199">
    <property type="taxonomic scope" value="Bacteria"/>
</dbReference>
<dbReference type="HOGENOM" id="CLU_139869_3_0_9"/>
<dbReference type="OrthoDB" id="9810484at2"/>
<dbReference type="PRO" id="PR:Q9CDX5"/>
<dbReference type="Proteomes" id="UP000002196">
    <property type="component" value="Chromosome"/>
</dbReference>
<dbReference type="GO" id="GO:0015935">
    <property type="term" value="C:small ribosomal subunit"/>
    <property type="evidence" value="ECO:0007669"/>
    <property type="project" value="TreeGrafter"/>
</dbReference>
<dbReference type="GO" id="GO:0019843">
    <property type="term" value="F:rRNA binding"/>
    <property type="evidence" value="ECO:0007669"/>
    <property type="project" value="UniProtKB-UniRule"/>
</dbReference>
<dbReference type="GO" id="GO:0003735">
    <property type="term" value="F:structural constituent of ribosome"/>
    <property type="evidence" value="ECO:0007669"/>
    <property type="project" value="InterPro"/>
</dbReference>
<dbReference type="GO" id="GO:0008270">
    <property type="term" value="F:zinc ion binding"/>
    <property type="evidence" value="ECO:0007669"/>
    <property type="project" value="UniProtKB-UniRule"/>
</dbReference>
<dbReference type="GO" id="GO:0006412">
    <property type="term" value="P:translation"/>
    <property type="evidence" value="ECO:0007669"/>
    <property type="project" value="UniProtKB-UniRule"/>
</dbReference>
<dbReference type="FunFam" id="4.10.830.10:FF:000001">
    <property type="entry name" value="30S ribosomal protein S14 type Z"/>
    <property type="match status" value="1"/>
</dbReference>
<dbReference type="Gene3D" id="4.10.830.10">
    <property type="entry name" value="30s Ribosomal Protein S14, Chain N"/>
    <property type="match status" value="1"/>
</dbReference>
<dbReference type="HAMAP" id="MF_01364_B">
    <property type="entry name" value="Ribosomal_uS14_2_B"/>
    <property type="match status" value="1"/>
</dbReference>
<dbReference type="InterPro" id="IPR001209">
    <property type="entry name" value="Ribosomal_uS14"/>
</dbReference>
<dbReference type="InterPro" id="IPR023053">
    <property type="entry name" value="Ribosomal_uS14_bact"/>
</dbReference>
<dbReference type="InterPro" id="IPR018271">
    <property type="entry name" value="Ribosomal_uS14_CS"/>
</dbReference>
<dbReference type="InterPro" id="IPR043140">
    <property type="entry name" value="Ribosomal_uS14_sf"/>
</dbReference>
<dbReference type="NCBIfam" id="NF005974">
    <property type="entry name" value="PRK08061.1"/>
    <property type="match status" value="1"/>
</dbReference>
<dbReference type="PANTHER" id="PTHR19836">
    <property type="entry name" value="30S RIBOSOMAL PROTEIN S14"/>
    <property type="match status" value="1"/>
</dbReference>
<dbReference type="PANTHER" id="PTHR19836:SF26">
    <property type="entry name" value="SMALL RIBOSOMAL SUBUNIT PROTEIN US14B"/>
    <property type="match status" value="1"/>
</dbReference>
<dbReference type="Pfam" id="PF00253">
    <property type="entry name" value="Ribosomal_S14"/>
    <property type="match status" value="1"/>
</dbReference>
<dbReference type="SUPFAM" id="SSF57716">
    <property type="entry name" value="Glucocorticoid receptor-like (DNA-binding domain)"/>
    <property type="match status" value="1"/>
</dbReference>
<dbReference type="PROSITE" id="PS00527">
    <property type="entry name" value="RIBOSOMAL_S14"/>
    <property type="match status" value="1"/>
</dbReference>
<evidence type="ECO:0000255" key="1">
    <source>
        <dbReference type="HAMAP-Rule" id="MF_01364"/>
    </source>
</evidence>
<evidence type="ECO:0000305" key="2"/>
<gene>
    <name evidence="1" type="primary">rpsZ</name>
    <name evidence="1" type="synonym">rpsN1</name>
    <name type="ordered locus">LL2086</name>
    <name type="ORF">L0391</name>
</gene>